<feature type="chain" id="PRO_0000368837" description="ATP synthase subunit b">
    <location>
        <begin position="1"/>
        <end position="168"/>
    </location>
</feature>
<feature type="transmembrane region" description="Helical" evidence="1">
    <location>
        <begin position="9"/>
        <end position="29"/>
    </location>
</feature>
<reference key="1">
    <citation type="journal article" date="2002" name="Genome Res.">
        <title>A complete sequence of the T. tengcongensis genome.</title>
        <authorList>
            <person name="Bao Q."/>
            <person name="Tian Y."/>
            <person name="Li W."/>
            <person name="Xu Z."/>
            <person name="Xuan Z."/>
            <person name="Hu S."/>
            <person name="Dong W."/>
            <person name="Yang J."/>
            <person name="Chen Y."/>
            <person name="Xue Y."/>
            <person name="Xu Y."/>
            <person name="Lai X."/>
            <person name="Huang L."/>
            <person name="Dong X."/>
            <person name="Ma Y."/>
            <person name="Ling L."/>
            <person name="Tan H."/>
            <person name="Chen R."/>
            <person name="Wang J."/>
            <person name="Yu J."/>
            <person name="Yang H."/>
        </authorList>
    </citation>
    <scope>NUCLEOTIDE SEQUENCE [LARGE SCALE GENOMIC DNA]</scope>
    <source>
        <strain>DSM 15242 / JCM 11007 / NBRC 100824 / MB4</strain>
    </source>
</reference>
<sequence>MKEGKALELFNLSTFVFTIINLLVLYYILKRLLFKPVTKFLEDRENKIKSALEDADKQREEAYSLKAQYEEKLQNAENEGRAIIEKAQKEAEERASEIIKSANKEAESIIEKAKEEAVLEKIKAMHELRAEMSHLIIEAASKVLEKKLPVEDEDLIKEVIEEAGSWNK</sequence>
<name>ATPF_CALS4</name>
<protein>
    <recommendedName>
        <fullName evidence="1">ATP synthase subunit b</fullName>
    </recommendedName>
    <alternativeName>
        <fullName evidence="1">ATP synthase F(0) sector subunit b</fullName>
    </alternativeName>
    <alternativeName>
        <fullName evidence="1">ATPase subunit I</fullName>
    </alternativeName>
    <alternativeName>
        <fullName evidence="1">F-type ATPase subunit b</fullName>
        <shortName evidence="1">F-ATPase subunit b</shortName>
    </alternativeName>
</protein>
<dbReference type="EMBL" id="AE008691">
    <property type="protein sequence ID" value="AAM23901.1"/>
    <property type="molecule type" value="Genomic_DNA"/>
</dbReference>
<dbReference type="RefSeq" id="WP_011025044.1">
    <property type="nucleotide sequence ID" value="NC_003869.1"/>
</dbReference>
<dbReference type="SMR" id="Q8RC19"/>
<dbReference type="STRING" id="273068.TTE0633"/>
<dbReference type="KEGG" id="tte:TTE0633"/>
<dbReference type="eggNOG" id="COG0711">
    <property type="taxonomic scope" value="Bacteria"/>
</dbReference>
<dbReference type="HOGENOM" id="CLU_079215_4_0_9"/>
<dbReference type="OrthoDB" id="9795863at2"/>
<dbReference type="Proteomes" id="UP000000555">
    <property type="component" value="Chromosome"/>
</dbReference>
<dbReference type="GO" id="GO:0005886">
    <property type="term" value="C:plasma membrane"/>
    <property type="evidence" value="ECO:0007669"/>
    <property type="project" value="UniProtKB-SubCell"/>
</dbReference>
<dbReference type="GO" id="GO:0045259">
    <property type="term" value="C:proton-transporting ATP synthase complex"/>
    <property type="evidence" value="ECO:0007669"/>
    <property type="project" value="UniProtKB-KW"/>
</dbReference>
<dbReference type="GO" id="GO:0046933">
    <property type="term" value="F:proton-transporting ATP synthase activity, rotational mechanism"/>
    <property type="evidence" value="ECO:0007669"/>
    <property type="project" value="UniProtKB-UniRule"/>
</dbReference>
<dbReference type="GO" id="GO:0046961">
    <property type="term" value="F:proton-transporting ATPase activity, rotational mechanism"/>
    <property type="evidence" value="ECO:0007669"/>
    <property type="project" value="TreeGrafter"/>
</dbReference>
<dbReference type="CDD" id="cd06503">
    <property type="entry name" value="ATP-synt_Fo_b"/>
    <property type="match status" value="1"/>
</dbReference>
<dbReference type="Gene3D" id="6.10.250.1580">
    <property type="match status" value="1"/>
</dbReference>
<dbReference type="HAMAP" id="MF_01398">
    <property type="entry name" value="ATP_synth_b_bprime"/>
    <property type="match status" value="1"/>
</dbReference>
<dbReference type="InterPro" id="IPR028987">
    <property type="entry name" value="ATP_synth_B-like_membr_sf"/>
</dbReference>
<dbReference type="InterPro" id="IPR002146">
    <property type="entry name" value="ATP_synth_b/b'su_bac/chlpt"/>
</dbReference>
<dbReference type="InterPro" id="IPR005864">
    <property type="entry name" value="ATP_synth_F0_bsu_bac"/>
</dbReference>
<dbReference type="InterPro" id="IPR050059">
    <property type="entry name" value="ATP_synthase_B_chain"/>
</dbReference>
<dbReference type="NCBIfam" id="TIGR01144">
    <property type="entry name" value="ATP_synt_b"/>
    <property type="match status" value="1"/>
</dbReference>
<dbReference type="PANTHER" id="PTHR33445">
    <property type="entry name" value="ATP SYNTHASE SUBUNIT B', CHLOROPLASTIC"/>
    <property type="match status" value="1"/>
</dbReference>
<dbReference type="PANTHER" id="PTHR33445:SF2">
    <property type="entry name" value="ATP SYNTHASE SUBUNIT B', CHLOROPLASTIC"/>
    <property type="match status" value="1"/>
</dbReference>
<dbReference type="Pfam" id="PF00430">
    <property type="entry name" value="ATP-synt_B"/>
    <property type="match status" value="1"/>
</dbReference>
<dbReference type="SUPFAM" id="SSF81573">
    <property type="entry name" value="F1F0 ATP synthase subunit B, membrane domain"/>
    <property type="match status" value="1"/>
</dbReference>
<organism>
    <name type="scientific">Caldanaerobacter subterraneus subsp. tengcongensis (strain DSM 15242 / JCM 11007 / NBRC 100824 / MB4)</name>
    <name type="common">Thermoanaerobacter tengcongensis</name>
    <dbReference type="NCBI Taxonomy" id="273068"/>
    <lineage>
        <taxon>Bacteria</taxon>
        <taxon>Bacillati</taxon>
        <taxon>Bacillota</taxon>
        <taxon>Clostridia</taxon>
        <taxon>Thermoanaerobacterales</taxon>
        <taxon>Thermoanaerobacteraceae</taxon>
        <taxon>Caldanaerobacter</taxon>
    </lineage>
</organism>
<proteinExistence type="inferred from homology"/>
<accession>Q8RC19</accession>
<gene>
    <name evidence="1" type="primary">atpF</name>
    <name type="ordered locus">TTE0633</name>
</gene>
<keyword id="KW-0066">ATP synthesis</keyword>
<keyword id="KW-1003">Cell membrane</keyword>
<keyword id="KW-0138">CF(0)</keyword>
<keyword id="KW-0375">Hydrogen ion transport</keyword>
<keyword id="KW-0406">Ion transport</keyword>
<keyword id="KW-0472">Membrane</keyword>
<keyword id="KW-1185">Reference proteome</keyword>
<keyword id="KW-0812">Transmembrane</keyword>
<keyword id="KW-1133">Transmembrane helix</keyword>
<keyword id="KW-0813">Transport</keyword>
<comment type="function">
    <text evidence="1">F(1)F(0) ATP synthase produces ATP from ADP in the presence of a proton or sodium gradient. F-type ATPases consist of two structural domains, F(1) containing the extramembraneous catalytic core and F(0) containing the membrane proton channel, linked together by a central stalk and a peripheral stalk. During catalysis, ATP synthesis in the catalytic domain of F(1) is coupled via a rotary mechanism of the central stalk subunits to proton translocation.</text>
</comment>
<comment type="function">
    <text evidence="1">Component of the F(0) channel, it forms part of the peripheral stalk, linking F(1) to F(0).</text>
</comment>
<comment type="subunit">
    <text evidence="1">F-type ATPases have 2 components, F(1) - the catalytic core - and F(0) - the membrane proton channel. F(1) has five subunits: alpha(3), beta(3), gamma(1), delta(1), epsilon(1). F(0) has three main subunits: a(1), b(2) and c(10-14). The alpha and beta chains form an alternating ring which encloses part of the gamma chain. F(1) is attached to F(0) by a central stalk formed by the gamma and epsilon chains, while a peripheral stalk is formed by the delta and b chains.</text>
</comment>
<comment type="subcellular location">
    <subcellularLocation>
        <location evidence="1">Cell membrane</location>
        <topology evidence="1">Single-pass membrane protein</topology>
    </subcellularLocation>
</comment>
<comment type="similarity">
    <text evidence="1">Belongs to the ATPase B chain family.</text>
</comment>
<evidence type="ECO:0000255" key="1">
    <source>
        <dbReference type="HAMAP-Rule" id="MF_01398"/>
    </source>
</evidence>